<feature type="chain" id="PRO_0000362991" description="Transaldolase">
    <location>
        <begin position="1" status="less than"/>
        <end position="24" status="greater than"/>
    </location>
</feature>
<feature type="unsure residue" description="I or L">
    <location>
        <position position="8"/>
    </location>
</feature>
<feature type="unsure residue" description="F or M">
    <location>
        <position position="9"/>
    </location>
</feature>
<feature type="unsure residue" description="Q or K">
    <location>
        <position position="10"/>
    </location>
</feature>
<feature type="unsure residue" description="K or Q">
    <location>
        <position position="11"/>
    </location>
</feature>
<feature type="unsure residue" description="I or L">
    <location>
        <position position="13"/>
    </location>
</feature>
<feature type="unsure residue" description="Q or K">
    <location>
        <position position="22"/>
    </location>
</feature>
<feature type="unsure residue" description="F or M">
    <location>
        <position position="23"/>
    </location>
</feature>
<feature type="non-consecutive residues" evidence="4">
    <location>
        <begin position="11"/>
        <end position="12"/>
    </location>
</feature>
<feature type="non-terminal residue">
    <location>
        <position position="1"/>
    </location>
</feature>
<feature type="non-terminal residue">
    <location>
        <position position="24"/>
    </location>
</feature>
<keyword id="KW-0963">Cytoplasm</keyword>
<keyword id="KW-0903">Direct protein sequencing</keyword>
<keyword id="KW-0570">Pentose shunt</keyword>
<keyword id="KW-0704">Schiff base</keyword>
<keyword id="KW-0808">Transferase</keyword>
<proteinExistence type="evidence at protein level"/>
<name>TALDO_CAPAA</name>
<evidence type="ECO:0000250" key="1">
    <source>
        <dbReference type="UniProtKB" id="P48983"/>
    </source>
</evidence>
<evidence type="ECO:0000255" key="2"/>
<evidence type="ECO:0000255" key="3">
    <source>
        <dbReference type="PROSITE-ProRule" id="PRU10019"/>
    </source>
</evidence>
<evidence type="ECO:0000305" key="4"/>
<comment type="function">
    <text evidence="1">Transaldolase is important for the balance of metabolites in the pentose-phosphate pathway.</text>
</comment>
<comment type="catalytic activity">
    <reaction evidence="1 3">
        <text>D-sedoheptulose 7-phosphate + D-glyceraldehyde 3-phosphate = D-erythrose 4-phosphate + beta-D-fructose 6-phosphate</text>
        <dbReference type="Rhea" id="RHEA:17053"/>
        <dbReference type="ChEBI" id="CHEBI:16897"/>
        <dbReference type="ChEBI" id="CHEBI:57483"/>
        <dbReference type="ChEBI" id="CHEBI:57634"/>
        <dbReference type="ChEBI" id="CHEBI:59776"/>
        <dbReference type="EC" id="2.2.1.2"/>
    </reaction>
</comment>
<comment type="pathway">
    <text>Carbohydrate degradation; pentose phosphate pathway; D-glyceraldehyde 3-phosphate and beta-D-fructose 6-phosphate from D-ribose 5-phosphate and D-xylulose 5-phosphate (non-oxidative stage): step 2/3.</text>
</comment>
<comment type="subcellular location">
    <subcellularLocation>
        <location evidence="1 4">Cytoplasm</location>
    </subcellularLocation>
</comment>
<comment type="similarity">
    <text evidence="2">Belongs to the transaldolase family.</text>
</comment>
<organism>
    <name type="scientific">Capsicum annuum var. annuum</name>
    <name type="common">Red pepper</name>
    <dbReference type="NCBI Taxonomy" id="40321"/>
    <lineage>
        <taxon>Eukaryota</taxon>
        <taxon>Viridiplantae</taxon>
        <taxon>Streptophyta</taxon>
        <taxon>Embryophyta</taxon>
        <taxon>Tracheophyta</taxon>
        <taxon>Spermatophyta</taxon>
        <taxon>Magnoliopsida</taxon>
        <taxon>eudicotyledons</taxon>
        <taxon>Gunneridae</taxon>
        <taxon>Pentapetalae</taxon>
        <taxon>asterids</taxon>
        <taxon>lamiids</taxon>
        <taxon>Solanales</taxon>
        <taxon>Solanaceae</taxon>
        <taxon>Solanoideae</taxon>
        <taxon>Capsiceae</taxon>
        <taxon>Capsicum</taxon>
    </lineage>
</organism>
<sequence>GVTSNPAIFQKAISTSNAYNDQFR</sequence>
<protein>
    <recommendedName>
        <fullName evidence="1">Transaldolase</fullName>
        <ecNumber>2.2.1.2</ecNumber>
    </recommendedName>
</protein>
<reference evidence="4" key="1">
    <citation type="submission" date="2008-07" db="UniProtKB">
        <authorList>
            <person name="Almagro L."/>
            <person name="Sabater Jara A.B."/>
            <person name="Pedreno M.A."/>
        </authorList>
    </citation>
    <scope>PROTEIN SEQUENCE</scope>
</reference>
<accession>P86071</accession>
<dbReference type="EC" id="2.2.1.2"/>
<dbReference type="UniPathway" id="UPA00115">
    <property type="reaction ID" value="UER00414"/>
</dbReference>
<dbReference type="GO" id="GO:0005737">
    <property type="term" value="C:cytoplasm"/>
    <property type="evidence" value="ECO:0007669"/>
    <property type="project" value="UniProtKB-SubCell"/>
</dbReference>
<dbReference type="GO" id="GO:0004801">
    <property type="term" value="F:transaldolase activity"/>
    <property type="evidence" value="ECO:0007669"/>
    <property type="project" value="UniProtKB-EC"/>
</dbReference>
<dbReference type="GO" id="GO:0005975">
    <property type="term" value="P:carbohydrate metabolic process"/>
    <property type="evidence" value="ECO:0007669"/>
    <property type="project" value="InterPro"/>
</dbReference>
<dbReference type="GO" id="GO:0006098">
    <property type="term" value="P:pentose-phosphate shunt"/>
    <property type="evidence" value="ECO:0007669"/>
    <property type="project" value="UniProtKB-UniPathway"/>
</dbReference>
<dbReference type="Gene3D" id="3.20.20.70">
    <property type="entry name" value="Aldolase class I"/>
    <property type="match status" value="1"/>
</dbReference>
<dbReference type="InterPro" id="IPR013785">
    <property type="entry name" value="Aldolase_TIM"/>
</dbReference>
<dbReference type="InterPro" id="IPR018225">
    <property type="entry name" value="Transaldolase_AS"/>
</dbReference>
<dbReference type="PROSITE" id="PS01054">
    <property type="entry name" value="TRANSALDOLASE_1"/>
    <property type="match status" value="1"/>
</dbReference>